<dbReference type="EC" id="1.1.1.94" evidence="1"/>
<dbReference type="EMBL" id="CP000492">
    <property type="protein sequence ID" value="ABL66568.1"/>
    <property type="molecule type" value="Genomic_DNA"/>
</dbReference>
<dbReference type="RefSeq" id="WP_011746343.1">
    <property type="nucleotide sequence ID" value="NC_008639.1"/>
</dbReference>
<dbReference type="SMR" id="A1BJJ1"/>
<dbReference type="STRING" id="290317.Cpha266_2580"/>
<dbReference type="KEGG" id="cph:Cpha266_2580"/>
<dbReference type="eggNOG" id="COG0240">
    <property type="taxonomic scope" value="Bacteria"/>
</dbReference>
<dbReference type="HOGENOM" id="CLU_033449_0_2_10"/>
<dbReference type="OrthoDB" id="9812273at2"/>
<dbReference type="UniPathway" id="UPA00940"/>
<dbReference type="Proteomes" id="UP000008701">
    <property type="component" value="Chromosome"/>
</dbReference>
<dbReference type="GO" id="GO:0005829">
    <property type="term" value="C:cytosol"/>
    <property type="evidence" value="ECO:0007669"/>
    <property type="project" value="TreeGrafter"/>
</dbReference>
<dbReference type="GO" id="GO:0047952">
    <property type="term" value="F:glycerol-3-phosphate dehydrogenase [NAD(P)+] activity"/>
    <property type="evidence" value="ECO:0007669"/>
    <property type="project" value="UniProtKB-UniRule"/>
</dbReference>
<dbReference type="GO" id="GO:0051287">
    <property type="term" value="F:NAD binding"/>
    <property type="evidence" value="ECO:0007669"/>
    <property type="project" value="InterPro"/>
</dbReference>
<dbReference type="GO" id="GO:0005975">
    <property type="term" value="P:carbohydrate metabolic process"/>
    <property type="evidence" value="ECO:0007669"/>
    <property type="project" value="InterPro"/>
</dbReference>
<dbReference type="GO" id="GO:0046167">
    <property type="term" value="P:glycerol-3-phosphate biosynthetic process"/>
    <property type="evidence" value="ECO:0007669"/>
    <property type="project" value="UniProtKB-UniRule"/>
</dbReference>
<dbReference type="GO" id="GO:0046168">
    <property type="term" value="P:glycerol-3-phosphate catabolic process"/>
    <property type="evidence" value="ECO:0007669"/>
    <property type="project" value="InterPro"/>
</dbReference>
<dbReference type="GO" id="GO:0006650">
    <property type="term" value="P:glycerophospholipid metabolic process"/>
    <property type="evidence" value="ECO:0007669"/>
    <property type="project" value="UniProtKB-UniRule"/>
</dbReference>
<dbReference type="GO" id="GO:0008654">
    <property type="term" value="P:phospholipid biosynthetic process"/>
    <property type="evidence" value="ECO:0007669"/>
    <property type="project" value="UniProtKB-KW"/>
</dbReference>
<dbReference type="FunFam" id="1.10.1040.10:FF:000001">
    <property type="entry name" value="Glycerol-3-phosphate dehydrogenase [NAD(P)+]"/>
    <property type="match status" value="1"/>
</dbReference>
<dbReference type="FunFam" id="3.40.50.720:FF:000019">
    <property type="entry name" value="Glycerol-3-phosphate dehydrogenase [NAD(P)+]"/>
    <property type="match status" value="1"/>
</dbReference>
<dbReference type="Gene3D" id="1.10.1040.10">
    <property type="entry name" value="N-(1-d-carboxylethyl)-l-norvaline Dehydrogenase, domain 2"/>
    <property type="match status" value="1"/>
</dbReference>
<dbReference type="Gene3D" id="3.40.50.720">
    <property type="entry name" value="NAD(P)-binding Rossmann-like Domain"/>
    <property type="match status" value="1"/>
</dbReference>
<dbReference type="HAMAP" id="MF_00394">
    <property type="entry name" value="NAD_Glyc3P_dehydrog"/>
    <property type="match status" value="1"/>
</dbReference>
<dbReference type="InterPro" id="IPR008927">
    <property type="entry name" value="6-PGluconate_DH-like_C_sf"/>
</dbReference>
<dbReference type="InterPro" id="IPR013328">
    <property type="entry name" value="6PGD_dom2"/>
</dbReference>
<dbReference type="InterPro" id="IPR006168">
    <property type="entry name" value="G3P_DH_NAD-dep"/>
</dbReference>
<dbReference type="InterPro" id="IPR006109">
    <property type="entry name" value="G3P_DH_NAD-dep_C"/>
</dbReference>
<dbReference type="InterPro" id="IPR011128">
    <property type="entry name" value="G3P_DH_NAD-dep_N"/>
</dbReference>
<dbReference type="InterPro" id="IPR036291">
    <property type="entry name" value="NAD(P)-bd_dom_sf"/>
</dbReference>
<dbReference type="NCBIfam" id="NF000940">
    <property type="entry name" value="PRK00094.1-2"/>
    <property type="match status" value="1"/>
</dbReference>
<dbReference type="NCBIfam" id="NF000941">
    <property type="entry name" value="PRK00094.1-3"/>
    <property type="match status" value="1"/>
</dbReference>
<dbReference type="NCBIfam" id="NF000942">
    <property type="entry name" value="PRK00094.1-4"/>
    <property type="match status" value="1"/>
</dbReference>
<dbReference type="PANTHER" id="PTHR11728">
    <property type="entry name" value="GLYCEROL-3-PHOSPHATE DEHYDROGENASE"/>
    <property type="match status" value="1"/>
</dbReference>
<dbReference type="PANTHER" id="PTHR11728:SF1">
    <property type="entry name" value="GLYCEROL-3-PHOSPHATE DEHYDROGENASE [NAD(+)] 2, CHLOROPLASTIC"/>
    <property type="match status" value="1"/>
</dbReference>
<dbReference type="Pfam" id="PF07479">
    <property type="entry name" value="NAD_Gly3P_dh_C"/>
    <property type="match status" value="1"/>
</dbReference>
<dbReference type="Pfam" id="PF01210">
    <property type="entry name" value="NAD_Gly3P_dh_N"/>
    <property type="match status" value="1"/>
</dbReference>
<dbReference type="PIRSF" id="PIRSF000114">
    <property type="entry name" value="Glycerol-3-P_dh"/>
    <property type="match status" value="1"/>
</dbReference>
<dbReference type="PRINTS" id="PR00077">
    <property type="entry name" value="GPDHDRGNASE"/>
</dbReference>
<dbReference type="SUPFAM" id="SSF48179">
    <property type="entry name" value="6-phosphogluconate dehydrogenase C-terminal domain-like"/>
    <property type="match status" value="1"/>
</dbReference>
<dbReference type="SUPFAM" id="SSF51735">
    <property type="entry name" value="NAD(P)-binding Rossmann-fold domains"/>
    <property type="match status" value="1"/>
</dbReference>
<dbReference type="PROSITE" id="PS00957">
    <property type="entry name" value="NAD_G3PDH"/>
    <property type="match status" value="1"/>
</dbReference>
<keyword id="KW-0963">Cytoplasm</keyword>
<keyword id="KW-0444">Lipid biosynthesis</keyword>
<keyword id="KW-0443">Lipid metabolism</keyword>
<keyword id="KW-0520">NAD</keyword>
<keyword id="KW-0521">NADP</keyword>
<keyword id="KW-0547">Nucleotide-binding</keyword>
<keyword id="KW-0560">Oxidoreductase</keyword>
<keyword id="KW-0594">Phospholipid biosynthesis</keyword>
<keyword id="KW-1208">Phospholipid metabolism</keyword>
<keyword id="KW-1185">Reference proteome</keyword>
<accession>A1BJJ1</accession>
<organism>
    <name type="scientific">Chlorobium phaeobacteroides (strain DSM 266 / SMG 266 / 2430)</name>
    <dbReference type="NCBI Taxonomy" id="290317"/>
    <lineage>
        <taxon>Bacteria</taxon>
        <taxon>Pseudomonadati</taxon>
        <taxon>Chlorobiota</taxon>
        <taxon>Chlorobiia</taxon>
        <taxon>Chlorobiales</taxon>
        <taxon>Chlorobiaceae</taxon>
        <taxon>Chlorobium/Pelodictyon group</taxon>
        <taxon>Chlorobium</taxon>
    </lineage>
</organism>
<name>GPDA_CHLPD</name>
<feature type="chain" id="PRO_1000049495" description="Glycerol-3-phosphate dehydrogenase [NAD(P)+]">
    <location>
        <begin position="1"/>
        <end position="333"/>
    </location>
</feature>
<feature type="active site" description="Proton acceptor" evidence="1">
    <location>
        <position position="191"/>
    </location>
</feature>
<feature type="binding site" evidence="1">
    <location>
        <position position="10"/>
    </location>
    <ligand>
        <name>NADPH</name>
        <dbReference type="ChEBI" id="CHEBI:57783"/>
    </ligand>
</feature>
<feature type="binding site" evidence="1">
    <location>
        <position position="11"/>
    </location>
    <ligand>
        <name>NADPH</name>
        <dbReference type="ChEBI" id="CHEBI:57783"/>
    </ligand>
</feature>
<feature type="binding site" evidence="1">
    <location>
        <position position="31"/>
    </location>
    <ligand>
        <name>NADPH</name>
        <dbReference type="ChEBI" id="CHEBI:57783"/>
    </ligand>
</feature>
<feature type="binding site" evidence="1">
    <location>
        <position position="32"/>
    </location>
    <ligand>
        <name>NADPH</name>
        <dbReference type="ChEBI" id="CHEBI:57783"/>
    </ligand>
</feature>
<feature type="binding site" evidence="1">
    <location>
        <position position="105"/>
    </location>
    <ligand>
        <name>NADPH</name>
        <dbReference type="ChEBI" id="CHEBI:57783"/>
    </ligand>
</feature>
<feature type="binding site" evidence="1">
    <location>
        <position position="105"/>
    </location>
    <ligand>
        <name>sn-glycerol 3-phosphate</name>
        <dbReference type="ChEBI" id="CHEBI:57597"/>
    </ligand>
</feature>
<feature type="binding site" evidence="1">
    <location>
        <position position="136"/>
    </location>
    <ligand>
        <name>sn-glycerol 3-phosphate</name>
        <dbReference type="ChEBI" id="CHEBI:57597"/>
    </ligand>
</feature>
<feature type="binding site" evidence="1">
    <location>
        <position position="138"/>
    </location>
    <ligand>
        <name>sn-glycerol 3-phosphate</name>
        <dbReference type="ChEBI" id="CHEBI:57597"/>
    </ligand>
</feature>
<feature type="binding site" evidence="1">
    <location>
        <position position="140"/>
    </location>
    <ligand>
        <name>NADPH</name>
        <dbReference type="ChEBI" id="CHEBI:57783"/>
    </ligand>
</feature>
<feature type="binding site" evidence="1">
    <location>
        <position position="191"/>
    </location>
    <ligand>
        <name>sn-glycerol 3-phosphate</name>
        <dbReference type="ChEBI" id="CHEBI:57597"/>
    </ligand>
</feature>
<feature type="binding site" evidence="1">
    <location>
        <position position="244"/>
    </location>
    <ligand>
        <name>sn-glycerol 3-phosphate</name>
        <dbReference type="ChEBI" id="CHEBI:57597"/>
    </ligand>
</feature>
<feature type="binding site" evidence="1">
    <location>
        <position position="254"/>
    </location>
    <ligand>
        <name>sn-glycerol 3-phosphate</name>
        <dbReference type="ChEBI" id="CHEBI:57597"/>
    </ligand>
</feature>
<feature type="binding site" evidence="1">
    <location>
        <position position="255"/>
    </location>
    <ligand>
        <name>NADPH</name>
        <dbReference type="ChEBI" id="CHEBI:57783"/>
    </ligand>
</feature>
<feature type="binding site" evidence="1">
    <location>
        <position position="255"/>
    </location>
    <ligand>
        <name>sn-glycerol 3-phosphate</name>
        <dbReference type="ChEBI" id="CHEBI:57597"/>
    </ligand>
</feature>
<feature type="binding site" evidence="1">
    <location>
        <position position="256"/>
    </location>
    <ligand>
        <name>sn-glycerol 3-phosphate</name>
        <dbReference type="ChEBI" id="CHEBI:57597"/>
    </ligand>
</feature>
<feature type="binding site" evidence="1">
    <location>
        <position position="279"/>
    </location>
    <ligand>
        <name>NADPH</name>
        <dbReference type="ChEBI" id="CHEBI:57783"/>
    </ligand>
</feature>
<feature type="binding site" evidence="1">
    <location>
        <position position="281"/>
    </location>
    <ligand>
        <name>NADPH</name>
        <dbReference type="ChEBI" id="CHEBI:57783"/>
    </ligand>
</feature>
<comment type="function">
    <text evidence="1">Catalyzes the reduction of the glycolytic intermediate dihydroxyacetone phosphate (DHAP) to sn-glycerol 3-phosphate (G3P), the key precursor for phospholipid synthesis.</text>
</comment>
<comment type="catalytic activity">
    <reaction evidence="1">
        <text>sn-glycerol 3-phosphate + NAD(+) = dihydroxyacetone phosphate + NADH + H(+)</text>
        <dbReference type="Rhea" id="RHEA:11092"/>
        <dbReference type="ChEBI" id="CHEBI:15378"/>
        <dbReference type="ChEBI" id="CHEBI:57540"/>
        <dbReference type="ChEBI" id="CHEBI:57597"/>
        <dbReference type="ChEBI" id="CHEBI:57642"/>
        <dbReference type="ChEBI" id="CHEBI:57945"/>
        <dbReference type="EC" id="1.1.1.94"/>
    </reaction>
    <physiologicalReaction direction="right-to-left" evidence="1">
        <dbReference type="Rhea" id="RHEA:11094"/>
    </physiologicalReaction>
</comment>
<comment type="catalytic activity">
    <reaction evidence="1">
        <text>sn-glycerol 3-phosphate + NADP(+) = dihydroxyacetone phosphate + NADPH + H(+)</text>
        <dbReference type="Rhea" id="RHEA:11096"/>
        <dbReference type="ChEBI" id="CHEBI:15378"/>
        <dbReference type="ChEBI" id="CHEBI:57597"/>
        <dbReference type="ChEBI" id="CHEBI:57642"/>
        <dbReference type="ChEBI" id="CHEBI:57783"/>
        <dbReference type="ChEBI" id="CHEBI:58349"/>
        <dbReference type="EC" id="1.1.1.94"/>
    </reaction>
    <physiologicalReaction direction="right-to-left" evidence="1">
        <dbReference type="Rhea" id="RHEA:11098"/>
    </physiologicalReaction>
</comment>
<comment type="pathway">
    <text evidence="1">Membrane lipid metabolism; glycerophospholipid metabolism.</text>
</comment>
<comment type="subcellular location">
    <subcellularLocation>
        <location evidence="1">Cytoplasm</location>
    </subcellularLocation>
</comment>
<comment type="similarity">
    <text evidence="1">Belongs to the NAD-dependent glycerol-3-phosphate dehydrogenase family.</text>
</comment>
<protein>
    <recommendedName>
        <fullName evidence="1">Glycerol-3-phosphate dehydrogenase [NAD(P)+]</fullName>
        <ecNumber evidence="1">1.1.1.94</ecNumber>
    </recommendedName>
    <alternativeName>
        <fullName evidence="1">NAD(P)(+)-dependent glycerol-3-phosphate dehydrogenase</fullName>
    </alternativeName>
    <alternativeName>
        <fullName evidence="1">NAD(P)H-dependent dihydroxyacetone-phosphate reductase</fullName>
    </alternativeName>
</protein>
<sequence length="333" mass="35661">MKIAVSGAGSWGTTLAVLLANKGHEVLLWAHRPEFAAALESDRENIRYLKGVRFPENLHVVSSLRDAVISSEMVVTAVPSQALRETVAMFSDCSLDGKIIVNVSKGIELKSGKRMSEVLLEVLPTLHASQVATLSGPSHAEEVSKGQPTTVVASSVSMGTAEIVQEAFHTGMFRVYVNTDIIGVELAGAVKNIIAIAAGITEGVGFGDNAKAAIITRGLAEMSRLCIRLGADPHTVSGLSGIGDLVVTCLSRHSRNRYVGEQIGAGRSLDDIVSQMNMVAEGVLTSKAVFELSRSVGVEMPITQAVYEMLFEHKPVQEAILDLMNREPKKEHY</sequence>
<gene>
    <name evidence="1" type="primary">gpsA</name>
    <name type="ordered locus">Cpha266_2580</name>
</gene>
<reference key="1">
    <citation type="submission" date="2006-12" db="EMBL/GenBank/DDBJ databases">
        <title>Complete sequence of Chlorobium phaeobacteroides DSM 266.</title>
        <authorList>
            <consortium name="US DOE Joint Genome Institute"/>
            <person name="Copeland A."/>
            <person name="Lucas S."/>
            <person name="Lapidus A."/>
            <person name="Barry K."/>
            <person name="Detter J.C."/>
            <person name="Glavina del Rio T."/>
            <person name="Hammon N."/>
            <person name="Israni S."/>
            <person name="Pitluck S."/>
            <person name="Goltsman E."/>
            <person name="Schmutz J."/>
            <person name="Larimer F."/>
            <person name="Land M."/>
            <person name="Hauser L."/>
            <person name="Mikhailova N."/>
            <person name="Li T."/>
            <person name="Overmann J."/>
            <person name="Bryant D.A."/>
            <person name="Richardson P."/>
        </authorList>
    </citation>
    <scope>NUCLEOTIDE SEQUENCE [LARGE SCALE GENOMIC DNA]</scope>
    <source>
        <strain>DSM 266 / SMG 266 / 2430</strain>
    </source>
</reference>
<evidence type="ECO:0000255" key="1">
    <source>
        <dbReference type="HAMAP-Rule" id="MF_00394"/>
    </source>
</evidence>
<proteinExistence type="inferred from homology"/>